<comment type="function">
    <text evidence="1">NDH shuttles electrons from NAD(P)H:plastoquinone, via FMN and iron-sulfur (Fe-S) centers, to quinones in the photosynthetic chain and possibly in a chloroplast respiratory chain. The immediate electron acceptor for the enzyme in this species is believed to be plastoquinone. Couples the redox reaction to proton translocation, and thus conserves the redox energy in a proton gradient (By similarity).</text>
</comment>
<comment type="catalytic activity">
    <reaction>
        <text>a plastoquinone + NADH + (n+1) H(+)(in) = a plastoquinol + NAD(+) + n H(+)(out)</text>
        <dbReference type="Rhea" id="RHEA:42608"/>
        <dbReference type="Rhea" id="RHEA-COMP:9561"/>
        <dbReference type="Rhea" id="RHEA-COMP:9562"/>
        <dbReference type="ChEBI" id="CHEBI:15378"/>
        <dbReference type="ChEBI" id="CHEBI:17757"/>
        <dbReference type="ChEBI" id="CHEBI:57540"/>
        <dbReference type="ChEBI" id="CHEBI:57945"/>
        <dbReference type="ChEBI" id="CHEBI:62192"/>
    </reaction>
</comment>
<comment type="catalytic activity">
    <reaction>
        <text>a plastoquinone + NADPH + (n+1) H(+)(in) = a plastoquinol + NADP(+) + n H(+)(out)</text>
        <dbReference type="Rhea" id="RHEA:42612"/>
        <dbReference type="Rhea" id="RHEA-COMP:9561"/>
        <dbReference type="Rhea" id="RHEA-COMP:9562"/>
        <dbReference type="ChEBI" id="CHEBI:15378"/>
        <dbReference type="ChEBI" id="CHEBI:17757"/>
        <dbReference type="ChEBI" id="CHEBI:57783"/>
        <dbReference type="ChEBI" id="CHEBI:58349"/>
        <dbReference type="ChEBI" id="CHEBI:62192"/>
    </reaction>
</comment>
<comment type="subunit">
    <text evidence="1">NDH is composed of at least 16 different subunits, 5 of which are encoded in the nucleus.</text>
</comment>
<comment type="subcellular location">
    <subcellularLocation>
        <location evidence="1">Plastid</location>
        <location evidence="1">Chloroplast thylakoid membrane</location>
        <topology evidence="1">Multi-pass membrane protein</topology>
    </subcellularLocation>
</comment>
<comment type="similarity">
    <text evidence="3">Belongs to the complex I subunit 6 family.</text>
</comment>
<accession>Q70XW1</accession>
<reference key="1">
    <citation type="journal article" date="2003" name="Mol. Biol. Evol.">
        <title>Analysis of the Amborella trichopoda chloroplast genome sequence suggests that Amborella is not a basal angiosperm.</title>
        <authorList>
            <person name="Goremykin V.V."/>
            <person name="Hirsch-Ernst K.I."/>
            <person name="Wolfl S."/>
            <person name="Hellwig F.H."/>
        </authorList>
    </citation>
    <scope>NUCLEOTIDE SEQUENCE [LARGE SCALE GENOMIC DNA]</scope>
</reference>
<evidence type="ECO:0000250" key="1"/>
<evidence type="ECO:0000255" key="2"/>
<evidence type="ECO:0000305" key="3"/>
<keyword id="KW-0150">Chloroplast</keyword>
<keyword id="KW-0472">Membrane</keyword>
<keyword id="KW-0520">NAD</keyword>
<keyword id="KW-0521">NADP</keyword>
<keyword id="KW-0934">Plastid</keyword>
<keyword id="KW-0618">Plastoquinone</keyword>
<keyword id="KW-0874">Quinone</keyword>
<keyword id="KW-1185">Reference proteome</keyword>
<keyword id="KW-0793">Thylakoid</keyword>
<keyword id="KW-1278">Translocase</keyword>
<keyword id="KW-0812">Transmembrane</keyword>
<keyword id="KW-1133">Transmembrane helix</keyword>
<keyword id="KW-0813">Transport</keyword>
<proteinExistence type="inferred from homology"/>
<dbReference type="EC" id="7.1.1.-"/>
<dbReference type="EMBL" id="AJ506156">
    <property type="protein sequence ID" value="CAD45159.1"/>
    <property type="molecule type" value="Genomic_DNA"/>
</dbReference>
<dbReference type="RefSeq" id="NP_904152.1">
    <property type="nucleotide sequence ID" value="NC_005086.1"/>
</dbReference>
<dbReference type="SMR" id="Q70XW1"/>
<dbReference type="STRING" id="13333.Q70XW1"/>
<dbReference type="GeneID" id="2546489"/>
<dbReference type="KEGG" id="atr:2546489"/>
<dbReference type="OrthoDB" id="1893972at2759"/>
<dbReference type="Proteomes" id="UP000017836">
    <property type="component" value="Chloroplast"/>
</dbReference>
<dbReference type="GO" id="GO:0009535">
    <property type="term" value="C:chloroplast thylakoid membrane"/>
    <property type="evidence" value="ECO:0007669"/>
    <property type="project" value="UniProtKB-SubCell"/>
</dbReference>
<dbReference type="GO" id="GO:0008137">
    <property type="term" value="F:NADH dehydrogenase (ubiquinone) activity"/>
    <property type="evidence" value="ECO:0007669"/>
    <property type="project" value="InterPro"/>
</dbReference>
<dbReference type="GO" id="GO:0048038">
    <property type="term" value="F:quinone binding"/>
    <property type="evidence" value="ECO:0007669"/>
    <property type="project" value="UniProtKB-KW"/>
</dbReference>
<dbReference type="FunFam" id="1.20.120.1200:FF:000002">
    <property type="entry name" value="NAD(P)H-quinone oxidoreductase subunit 6, chloroplastic"/>
    <property type="match status" value="1"/>
</dbReference>
<dbReference type="Gene3D" id="1.20.120.1200">
    <property type="entry name" value="NADH-ubiquinone/plastoquinone oxidoreductase chain 6, subunit NuoJ"/>
    <property type="match status" value="1"/>
</dbReference>
<dbReference type="InterPro" id="IPR050290">
    <property type="entry name" value="NAD(P)H-Q_Oxidoreduct_6"/>
</dbReference>
<dbReference type="InterPro" id="IPR001457">
    <property type="entry name" value="NADH_UbQ/plastoQ_OxRdtase_su6"/>
</dbReference>
<dbReference type="InterPro" id="IPR042106">
    <property type="entry name" value="Nuo/plastoQ_OxRdtase_6_NuoJ"/>
</dbReference>
<dbReference type="PANTHER" id="PTHR48479">
    <property type="entry name" value="NAD(P)H-QUINONE OXIDOREDUCTASE SUBUNIT 6, CHLOROPLASTIC"/>
    <property type="match status" value="1"/>
</dbReference>
<dbReference type="PANTHER" id="PTHR48479:SF1">
    <property type="entry name" value="NAD(P)H-QUINONE OXIDOREDUCTASE SUBUNIT 6, CHLOROPLASTIC"/>
    <property type="match status" value="1"/>
</dbReference>
<dbReference type="Pfam" id="PF00499">
    <property type="entry name" value="Oxidored_q3"/>
    <property type="match status" value="1"/>
</dbReference>
<organism>
    <name type="scientific">Amborella trichopoda</name>
    <dbReference type="NCBI Taxonomy" id="13333"/>
    <lineage>
        <taxon>Eukaryota</taxon>
        <taxon>Viridiplantae</taxon>
        <taxon>Streptophyta</taxon>
        <taxon>Embryophyta</taxon>
        <taxon>Tracheophyta</taxon>
        <taxon>Spermatophyta</taxon>
        <taxon>Magnoliopsida</taxon>
        <taxon>Amborellales</taxon>
        <taxon>Amborellaceae</taxon>
        <taxon>Amborella</taxon>
    </lineage>
</organism>
<geneLocation type="chloroplast"/>
<feature type="chain" id="PRO_0000360226" description="NAD(P)H-quinone oxidoreductase subunit 6, chloroplastic">
    <location>
        <begin position="1"/>
        <end position="177"/>
    </location>
</feature>
<feature type="transmembrane region" description="Helical" evidence="2">
    <location>
        <begin position="10"/>
        <end position="30"/>
    </location>
</feature>
<feature type="transmembrane region" description="Helical" evidence="2">
    <location>
        <begin position="32"/>
        <end position="52"/>
    </location>
</feature>
<feature type="transmembrane region" description="Helical" evidence="2">
    <location>
        <begin position="61"/>
        <end position="81"/>
    </location>
</feature>
<feature type="transmembrane region" description="Helical" evidence="2">
    <location>
        <begin position="93"/>
        <end position="115"/>
    </location>
</feature>
<feature type="transmembrane region" description="Helical" evidence="2">
    <location>
        <begin position="152"/>
        <end position="172"/>
    </location>
</feature>
<gene>
    <name type="primary">ndhG</name>
</gene>
<name>NU6C_AMBTC</name>
<sequence>MDLLGPIHDILLVSLGSGIILGSLGVVLLTNPIYSAFSSGLVLVRISLFHILSNSYFVAAAQLLIYVGAINVLIIFAVMFMNGSEYYNNFHLWTVGDGISSVVCTSILFSLIATILDTSWYGIIWTTRSNQIIEQDLTSNVQQIGIHLSTDFFLPFELISIILLVALVGAIAMARAE</sequence>
<protein>
    <recommendedName>
        <fullName>NAD(P)H-quinone oxidoreductase subunit 6, chloroplastic</fullName>
        <ecNumber>7.1.1.-</ecNumber>
    </recommendedName>
    <alternativeName>
        <fullName>NAD(P)H dehydrogenase subunit 6</fullName>
    </alternativeName>
    <alternativeName>
        <fullName>NADH-plastoquinone oxidoreductase subunit 6</fullName>
    </alternativeName>
</protein>